<dbReference type="EMBL" id="CP000703">
    <property type="protein sequence ID" value="ABQ48557.1"/>
    <property type="molecule type" value="Genomic_DNA"/>
</dbReference>
<dbReference type="RefSeq" id="WP_000692521.1">
    <property type="nucleotide sequence ID" value="NC_009487.1"/>
</dbReference>
<dbReference type="SMR" id="A5IQT4"/>
<dbReference type="KEGG" id="saj:SaurJH9_0754"/>
<dbReference type="HOGENOM" id="CLU_114845_3_0_9"/>
<dbReference type="GO" id="GO:0010181">
    <property type="term" value="F:FMN binding"/>
    <property type="evidence" value="ECO:0007669"/>
    <property type="project" value="InterPro"/>
</dbReference>
<dbReference type="GO" id="GO:0036211">
    <property type="term" value="P:protein modification process"/>
    <property type="evidence" value="ECO:0007669"/>
    <property type="project" value="InterPro"/>
</dbReference>
<dbReference type="Gene3D" id="3.40.50.360">
    <property type="match status" value="1"/>
</dbReference>
<dbReference type="HAMAP" id="MF_00128">
    <property type="entry name" value="NrdI"/>
    <property type="match status" value="1"/>
</dbReference>
<dbReference type="InterPro" id="IPR029039">
    <property type="entry name" value="Flavoprotein-like_sf"/>
</dbReference>
<dbReference type="InterPro" id="IPR020852">
    <property type="entry name" value="RNR_Ib_NrdI_bac"/>
</dbReference>
<dbReference type="InterPro" id="IPR004465">
    <property type="entry name" value="RNR_NrdI"/>
</dbReference>
<dbReference type="NCBIfam" id="TIGR00333">
    <property type="entry name" value="nrdI"/>
    <property type="match status" value="1"/>
</dbReference>
<dbReference type="PANTHER" id="PTHR37297">
    <property type="entry name" value="PROTEIN NRDI"/>
    <property type="match status" value="1"/>
</dbReference>
<dbReference type="PANTHER" id="PTHR37297:SF1">
    <property type="entry name" value="PROTEIN NRDI"/>
    <property type="match status" value="1"/>
</dbReference>
<dbReference type="Pfam" id="PF07972">
    <property type="entry name" value="Flavodoxin_NdrI"/>
    <property type="match status" value="1"/>
</dbReference>
<dbReference type="PIRSF" id="PIRSF005087">
    <property type="entry name" value="NrdI"/>
    <property type="match status" value="1"/>
</dbReference>
<dbReference type="SUPFAM" id="SSF52218">
    <property type="entry name" value="Flavoproteins"/>
    <property type="match status" value="1"/>
</dbReference>
<gene>
    <name evidence="1" type="primary">nrdI</name>
    <name type="ordered locus">SaurJH9_0754</name>
</gene>
<organism>
    <name type="scientific">Staphylococcus aureus (strain JH9)</name>
    <dbReference type="NCBI Taxonomy" id="359786"/>
    <lineage>
        <taxon>Bacteria</taxon>
        <taxon>Bacillati</taxon>
        <taxon>Bacillota</taxon>
        <taxon>Bacilli</taxon>
        <taxon>Bacillales</taxon>
        <taxon>Staphylococcaceae</taxon>
        <taxon>Staphylococcus</taxon>
    </lineage>
</organism>
<sequence>MKIIYFSFTGNVRRFIKRTELENTLEITAENCMEPVHEPFIIVTGTIGFGEVPEPVQSFLEVNHQYIRGVAASGNRNWGLNFAKAGRTISEEYNVPLLMKFELHGKNKDVIEFKNKVGNFNENHGREKVQSY</sequence>
<reference key="1">
    <citation type="submission" date="2007-05" db="EMBL/GenBank/DDBJ databases">
        <title>Complete sequence of chromosome of Staphylococcus aureus subsp. aureus JH9.</title>
        <authorList>
            <consortium name="US DOE Joint Genome Institute"/>
            <person name="Copeland A."/>
            <person name="Lucas S."/>
            <person name="Lapidus A."/>
            <person name="Barry K."/>
            <person name="Detter J.C."/>
            <person name="Glavina del Rio T."/>
            <person name="Hammon N."/>
            <person name="Israni S."/>
            <person name="Pitluck S."/>
            <person name="Chain P."/>
            <person name="Malfatti S."/>
            <person name="Shin M."/>
            <person name="Vergez L."/>
            <person name="Schmutz J."/>
            <person name="Larimer F."/>
            <person name="Land M."/>
            <person name="Hauser L."/>
            <person name="Kyrpides N."/>
            <person name="Kim E."/>
            <person name="Tomasz A."/>
            <person name="Richardson P."/>
        </authorList>
    </citation>
    <scope>NUCLEOTIDE SEQUENCE [LARGE SCALE GENOMIC DNA]</scope>
    <source>
        <strain>JH9</strain>
    </source>
</reference>
<protein>
    <recommendedName>
        <fullName evidence="1">Protein NrdI</fullName>
    </recommendedName>
</protein>
<proteinExistence type="inferred from homology"/>
<evidence type="ECO:0000255" key="1">
    <source>
        <dbReference type="HAMAP-Rule" id="MF_00128"/>
    </source>
</evidence>
<name>NRDI_STAA9</name>
<feature type="chain" id="PRO_1000076303" description="Protein NrdI">
    <location>
        <begin position="1"/>
        <end position="132"/>
    </location>
</feature>
<comment type="function">
    <text evidence="1">Probably involved in ribonucleotide reductase function.</text>
</comment>
<comment type="similarity">
    <text evidence="1">Belongs to the NrdI family.</text>
</comment>
<accession>A5IQT4</accession>